<accession>B0BRR3</accession>
<protein>
    <recommendedName>
        <fullName evidence="1">Methionyl-tRNA formyltransferase</fullName>
        <ecNumber evidence="1">2.1.2.9</ecNumber>
    </recommendedName>
</protein>
<feature type="chain" id="PRO_1000098372" description="Methionyl-tRNA formyltransferase">
    <location>
        <begin position="1"/>
        <end position="316"/>
    </location>
</feature>
<feature type="binding site" evidence="1">
    <location>
        <begin position="112"/>
        <end position="115"/>
    </location>
    <ligand>
        <name>(6S)-5,6,7,8-tetrahydrofolate</name>
        <dbReference type="ChEBI" id="CHEBI:57453"/>
    </ligand>
</feature>
<comment type="function">
    <text evidence="1">Attaches a formyl group to the free amino group of methionyl-tRNA(fMet). The formyl group appears to play a dual role in the initiator identity of N-formylmethionyl-tRNA by promoting its recognition by IF2 and preventing the misappropriation of this tRNA by the elongation apparatus.</text>
</comment>
<comment type="catalytic activity">
    <reaction evidence="1">
        <text>L-methionyl-tRNA(fMet) + (6R)-10-formyltetrahydrofolate = N-formyl-L-methionyl-tRNA(fMet) + (6S)-5,6,7,8-tetrahydrofolate + H(+)</text>
        <dbReference type="Rhea" id="RHEA:24380"/>
        <dbReference type="Rhea" id="RHEA-COMP:9952"/>
        <dbReference type="Rhea" id="RHEA-COMP:9953"/>
        <dbReference type="ChEBI" id="CHEBI:15378"/>
        <dbReference type="ChEBI" id="CHEBI:57453"/>
        <dbReference type="ChEBI" id="CHEBI:78530"/>
        <dbReference type="ChEBI" id="CHEBI:78844"/>
        <dbReference type="ChEBI" id="CHEBI:195366"/>
        <dbReference type="EC" id="2.1.2.9"/>
    </reaction>
</comment>
<comment type="similarity">
    <text evidence="1">Belongs to the Fmt family.</text>
</comment>
<reference key="1">
    <citation type="journal article" date="2008" name="PLoS ONE">
        <title>Genome biology of Actinobacillus pleuropneumoniae JL03, an isolate of serotype 3 prevalent in China.</title>
        <authorList>
            <person name="Xu Z."/>
            <person name="Zhou Y."/>
            <person name="Li L."/>
            <person name="Zhou R."/>
            <person name="Xiao S."/>
            <person name="Wan Y."/>
            <person name="Zhang S."/>
            <person name="Wang K."/>
            <person name="Li W."/>
            <person name="Li L."/>
            <person name="Jin H."/>
            <person name="Kang M."/>
            <person name="Dalai B."/>
            <person name="Li T."/>
            <person name="Liu L."/>
            <person name="Cheng Y."/>
            <person name="Zhang L."/>
            <person name="Xu T."/>
            <person name="Zheng H."/>
            <person name="Pu S."/>
            <person name="Wang B."/>
            <person name="Gu W."/>
            <person name="Zhang X.L."/>
            <person name="Zhu G.-F."/>
            <person name="Wang S."/>
            <person name="Zhao G.-P."/>
            <person name="Chen H."/>
        </authorList>
    </citation>
    <scope>NUCLEOTIDE SEQUENCE [LARGE SCALE GENOMIC DNA]</scope>
    <source>
        <strain>JL03</strain>
    </source>
</reference>
<organism>
    <name type="scientific">Actinobacillus pleuropneumoniae serotype 3 (strain JL03)</name>
    <dbReference type="NCBI Taxonomy" id="434271"/>
    <lineage>
        <taxon>Bacteria</taxon>
        <taxon>Pseudomonadati</taxon>
        <taxon>Pseudomonadota</taxon>
        <taxon>Gammaproteobacteria</taxon>
        <taxon>Pasteurellales</taxon>
        <taxon>Pasteurellaceae</taxon>
        <taxon>Actinobacillus</taxon>
    </lineage>
</organism>
<evidence type="ECO:0000255" key="1">
    <source>
        <dbReference type="HAMAP-Rule" id="MF_00182"/>
    </source>
</evidence>
<gene>
    <name evidence="1" type="primary">fmt</name>
    <name type="ordered locus">APJL_1620</name>
</gene>
<sequence>MSKLNIIFAGTPDFAAQHLQALLDSEHNVIAVYTQPDKPAGRGKKLQASPVKQLAEQHNIPVYQPKSLRKEDAQAELKALNADVMVVVAYGLILPEAVLNAPKYGCLNVHGSLLPRWRGAAPIQRSIWAGDQETGVTIMQMDIGLDTGDMLHKVTTPIAADETSASLYAKLAELAPPALLEVLNGLESQAFKAEKQDEALSNYAEKLSKEEAKLDWNLTACQLERNIRAFNPWPISFLTLEVDGVEQSVKVYQANVLPHQAKAAGTVLQADKNGIQIATQEGVLNITQLQPSGKKPMSVQDFLNGRADWFAVGKQL</sequence>
<keyword id="KW-0648">Protein biosynthesis</keyword>
<keyword id="KW-0808">Transferase</keyword>
<dbReference type="EC" id="2.1.2.9" evidence="1"/>
<dbReference type="EMBL" id="CP000687">
    <property type="protein sequence ID" value="ABY70172.1"/>
    <property type="molecule type" value="Genomic_DNA"/>
</dbReference>
<dbReference type="RefSeq" id="WP_005598937.1">
    <property type="nucleotide sequence ID" value="NC_010278.1"/>
</dbReference>
<dbReference type="SMR" id="B0BRR3"/>
<dbReference type="GeneID" id="48599873"/>
<dbReference type="KEGG" id="apj:APJL_1620"/>
<dbReference type="HOGENOM" id="CLU_033347_1_2_6"/>
<dbReference type="Proteomes" id="UP000008547">
    <property type="component" value="Chromosome"/>
</dbReference>
<dbReference type="GO" id="GO:0005829">
    <property type="term" value="C:cytosol"/>
    <property type="evidence" value="ECO:0007669"/>
    <property type="project" value="TreeGrafter"/>
</dbReference>
<dbReference type="GO" id="GO:0004479">
    <property type="term" value="F:methionyl-tRNA formyltransferase activity"/>
    <property type="evidence" value="ECO:0007669"/>
    <property type="project" value="UniProtKB-UniRule"/>
</dbReference>
<dbReference type="CDD" id="cd08646">
    <property type="entry name" value="FMT_core_Met-tRNA-FMT_N"/>
    <property type="match status" value="1"/>
</dbReference>
<dbReference type="CDD" id="cd08704">
    <property type="entry name" value="Met_tRNA_FMT_C"/>
    <property type="match status" value="1"/>
</dbReference>
<dbReference type="FunFam" id="3.40.50.12230:FF:000001">
    <property type="entry name" value="Methionyl-tRNA formyltransferase"/>
    <property type="match status" value="1"/>
</dbReference>
<dbReference type="FunFam" id="3.40.50.170:FF:000003">
    <property type="entry name" value="Methionyl-tRNA formyltransferase"/>
    <property type="match status" value="1"/>
</dbReference>
<dbReference type="Gene3D" id="3.10.25.10">
    <property type="entry name" value="Formyl transferase, C-terminal domain"/>
    <property type="match status" value="1"/>
</dbReference>
<dbReference type="Gene3D" id="3.40.50.170">
    <property type="entry name" value="Formyl transferase, N-terminal domain"/>
    <property type="match status" value="1"/>
</dbReference>
<dbReference type="HAMAP" id="MF_00182">
    <property type="entry name" value="Formyl_trans"/>
    <property type="match status" value="1"/>
</dbReference>
<dbReference type="InterPro" id="IPR005794">
    <property type="entry name" value="Fmt"/>
</dbReference>
<dbReference type="InterPro" id="IPR005793">
    <property type="entry name" value="Formyl_trans_C"/>
</dbReference>
<dbReference type="InterPro" id="IPR037022">
    <property type="entry name" value="Formyl_trans_C_sf"/>
</dbReference>
<dbReference type="InterPro" id="IPR002376">
    <property type="entry name" value="Formyl_transf_N"/>
</dbReference>
<dbReference type="InterPro" id="IPR036477">
    <property type="entry name" value="Formyl_transf_N_sf"/>
</dbReference>
<dbReference type="InterPro" id="IPR011034">
    <property type="entry name" value="Formyl_transferase-like_C_sf"/>
</dbReference>
<dbReference type="InterPro" id="IPR001555">
    <property type="entry name" value="GART_AS"/>
</dbReference>
<dbReference type="InterPro" id="IPR044135">
    <property type="entry name" value="Met-tRNA-FMT_C"/>
</dbReference>
<dbReference type="InterPro" id="IPR041711">
    <property type="entry name" value="Met-tRNA-FMT_N"/>
</dbReference>
<dbReference type="NCBIfam" id="TIGR00460">
    <property type="entry name" value="fmt"/>
    <property type="match status" value="1"/>
</dbReference>
<dbReference type="PANTHER" id="PTHR11138">
    <property type="entry name" value="METHIONYL-TRNA FORMYLTRANSFERASE"/>
    <property type="match status" value="1"/>
</dbReference>
<dbReference type="PANTHER" id="PTHR11138:SF5">
    <property type="entry name" value="METHIONYL-TRNA FORMYLTRANSFERASE, MITOCHONDRIAL"/>
    <property type="match status" value="1"/>
</dbReference>
<dbReference type="Pfam" id="PF02911">
    <property type="entry name" value="Formyl_trans_C"/>
    <property type="match status" value="1"/>
</dbReference>
<dbReference type="Pfam" id="PF00551">
    <property type="entry name" value="Formyl_trans_N"/>
    <property type="match status" value="1"/>
</dbReference>
<dbReference type="SUPFAM" id="SSF50486">
    <property type="entry name" value="FMT C-terminal domain-like"/>
    <property type="match status" value="1"/>
</dbReference>
<dbReference type="SUPFAM" id="SSF53328">
    <property type="entry name" value="Formyltransferase"/>
    <property type="match status" value="1"/>
</dbReference>
<dbReference type="PROSITE" id="PS00373">
    <property type="entry name" value="GART"/>
    <property type="match status" value="1"/>
</dbReference>
<proteinExistence type="inferred from homology"/>
<name>FMT_ACTPJ</name>